<evidence type="ECO:0000255" key="1">
    <source>
        <dbReference type="HAMAP-Rule" id="MF_00003"/>
    </source>
</evidence>
<organism>
    <name type="scientific">Helicobacter pylori (strain HPAG1)</name>
    <dbReference type="NCBI Taxonomy" id="357544"/>
    <lineage>
        <taxon>Bacteria</taxon>
        <taxon>Pseudomonadati</taxon>
        <taxon>Campylobacterota</taxon>
        <taxon>Epsilonproteobacteria</taxon>
        <taxon>Campylobacterales</taxon>
        <taxon>Helicobacteraceae</taxon>
        <taxon>Helicobacter</taxon>
    </lineage>
</organism>
<gene>
    <name evidence="1" type="primary">rbfA</name>
    <name type="ordered locus">HPAG1_0400</name>
</gene>
<feature type="chain" id="PRO_1000000121" description="Ribosome-binding factor A">
    <location>
        <begin position="1"/>
        <end position="111"/>
    </location>
</feature>
<accession>Q1CUA5</accession>
<sequence length="111" mass="12447">MNAHKERLESNLLELLQEALAGLNDSELNSLSVTKVECSKGKHHALVFVLSSDHKILSKLKKAEGLIRQFVLQASGWFKCPKLSFVSDNSLEKQLRLDAIFNEIAKGRDND</sequence>
<keyword id="KW-0963">Cytoplasm</keyword>
<keyword id="KW-0690">Ribosome biogenesis</keyword>
<reference key="1">
    <citation type="journal article" date="2006" name="Proc. Natl. Acad. Sci. U.S.A.">
        <title>The complete genome sequence of a chronic atrophic gastritis Helicobacter pylori strain: evolution during disease progression.</title>
        <authorList>
            <person name="Oh J.D."/>
            <person name="Kling-Baeckhed H."/>
            <person name="Giannakis M."/>
            <person name="Xu J."/>
            <person name="Fulton R.S."/>
            <person name="Fulton L.A."/>
            <person name="Cordum H.S."/>
            <person name="Wang C."/>
            <person name="Elliott G."/>
            <person name="Edwards J."/>
            <person name="Mardis E.R."/>
            <person name="Engstrand L.G."/>
            <person name="Gordon J.I."/>
        </authorList>
    </citation>
    <scope>NUCLEOTIDE SEQUENCE [LARGE SCALE GENOMIC DNA]</scope>
    <source>
        <strain>HPAG1</strain>
    </source>
</reference>
<protein>
    <recommendedName>
        <fullName evidence="1">Ribosome-binding factor A</fullName>
    </recommendedName>
</protein>
<comment type="function">
    <text evidence="1">One of several proteins that assist in the late maturation steps of the functional core of the 30S ribosomal subunit. Associates with free 30S ribosomal subunits (but not with 30S subunits that are part of 70S ribosomes or polysomes). Required for efficient processing of 16S rRNA. May interact with the 5'-terminal helix region of 16S rRNA.</text>
</comment>
<comment type="subunit">
    <text evidence="1">Monomer. Binds 30S ribosomal subunits, but not 50S ribosomal subunits or 70S ribosomes.</text>
</comment>
<comment type="subcellular location">
    <subcellularLocation>
        <location evidence="1">Cytoplasm</location>
    </subcellularLocation>
</comment>
<comment type="similarity">
    <text evidence="1">Belongs to the RbfA family.</text>
</comment>
<proteinExistence type="inferred from homology"/>
<dbReference type="EMBL" id="CP000241">
    <property type="protein sequence ID" value="ABF84467.1"/>
    <property type="molecule type" value="Genomic_DNA"/>
</dbReference>
<dbReference type="RefSeq" id="WP_000991146.1">
    <property type="nucleotide sequence ID" value="NC_008086.1"/>
</dbReference>
<dbReference type="SMR" id="Q1CUA5"/>
<dbReference type="KEGG" id="hpa:HPAG1_0400"/>
<dbReference type="HOGENOM" id="CLU_089475_6_5_7"/>
<dbReference type="GO" id="GO:0005737">
    <property type="term" value="C:cytoplasm"/>
    <property type="evidence" value="ECO:0007669"/>
    <property type="project" value="UniProtKB-SubCell"/>
</dbReference>
<dbReference type="GO" id="GO:0030490">
    <property type="term" value="P:maturation of SSU-rRNA"/>
    <property type="evidence" value="ECO:0007669"/>
    <property type="project" value="UniProtKB-UniRule"/>
</dbReference>
<dbReference type="Gene3D" id="3.30.300.20">
    <property type="match status" value="1"/>
</dbReference>
<dbReference type="HAMAP" id="MF_00003">
    <property type="entry name" value="RbfA"/>
    <property type="match status" value="1"/>
</dbReference>
<dbReference type="InterPro" id="IPR015946">
    <property type="entry name" value="KH_dom-like_a/b"/>
</dbReference>
<dbReference type="InterPro" id="IPR000238">
    <property type="entry name" value="RbfA"/>
</dbReference>
<dbReference type="InterPro" id="IPR023799">
    <property type="entry name" value="RbfA_dom_sf"/>
</dbReference>
<dbReference type="InterPro" id="IPR020053">
    <property type="entry name" value="Ribosome-bd_factorA_CS"/>
</dbReference>
<dbReference type="NCBIfam" id="TIGR00082">
    <property type="entry name" value="rbfA"/>
    <property type="match status" value="1"/>
</dbReference>
<dbReference type="Pfam" id="PF02033">
    <property type="entry name" value="RBFA"/>
    <property type="match status" value="1"/>
</dbReference>
<dbReference type="SUPFAM" id="SSF89919">
    <property type="entry name" value="Ribosome-binding factor A, RbfA"/>
    <property type="match status" value="1"/>
</dbReference>
<dbReference type="PROSITE" id="PS01319">
    <property type="entry name" value="RBFA"/>
    <property type="match status" value="1"/>
</dbReference>
<name>RBFA_HELPH</name>